<protein>
    <recommendedName>
        <fullName>Colicin-V</fullName>
    </recommendedName>
    <alternativeName>
        <fullName>Microcin-V bacteriocin</fullName>
    </alternativeName>
</protein>
<name>CEAV_ECOLX</name>
<geneLocation type="plasmid">
    <name>IncFI ColV3-K30</name>
</geneLocation>
<evidence type="ECO:0000269" key="1">
    <source>
    </source>
</evidence>
<evidence type="ECO:0000269" key="2">
    <source>
    </source>
</evidence>
<sequence>MRTLTLNELDSVSGGASGRDIAMAIGTLSGQFVAGGIGAAAGGVAGGAIYDYASTHKPNPAMSPSGLGGTIKQKPEGIPSEAWNYAAGRLCNWSPNNLSDVCL</sequence>
<reference key="1">
    <citation type="journal article" date="1990" name="EMBO J.">
        <title>Genetic analysis of an MDR-like export system: the secretion of colicin V.</title>
        <authorList>
            <person name="Gilson L."/>
            <person name="Mahanty H.K."/>
            <person name="Kolter R."/>
        </authorList>
    </citation>
    <scope>NUCLEOTIDE SEQUENCE [GENOMIC DNA]</scope>
</reference>
<reference key="2">
    <citation type="submission" date="1998-05" db="EMBL/GenBank/DDBJ databases">
        <authorList>
            <person name="Pinou T."/>
            <person name="Riley M.A."/>
        </authorList>
    </citation>
    <scope>NUCLEOTIDE SEQUENCE [GENOMIC DNA]</scope>
    <source>
        <strain>Various strains</strain>
    </source>
</reference>
<reference key="3">
    <citation type="journal article" date="1998" name="J. Exp. Med.">
        <title>Characterization of a hemoglobin protease secreted by the pathogenic Escherichia coli strain EB1.</title>
        <authorList>
            <person name="Otto B.R."/>
            <person name="van Dooren S.J.M."/>
            <person name="Nuijens J.H."/>
            <person name="Luirink J."/>
            <person name="Oudega B."/>
        </authorList>
    </citation>
    <scope>NUCLEOTIDE SEQUENCE [GENOMIC DNA]</scope>
</reference>
<reference key="4">
    <citation type="journal article" date="1994" name="Microbiology">
        <title>The leader peptide of colicin V shares consensus sequences with leader peptides that are common among peptide bacteriocins produced by Gram-positive bacteria.</title>
        <authorList>
            <person name="Havarstein L.S."/>
            <person name="Holo H."/>
            <person name="Nes I.F."/>
        </authorList>
    </citation>
    <scope>PROTEIN SEQUENCE OF 16-62</scope>
    <scope>DISULFIDE BOND</scope>
</reference>
<reference key="5">
    <citation type="journal article" date="1994" name="Biochemistry">
        <title>Purification and characterization of colicin V from Escherichia coli culture supernatants.</title>
        <authorList>
            <person name="Fath M.J."/>
            <person name="Zhang L.H."/>
            <person name="Rush J."/>
            <person name="Kolter R."/>
        </authorList>
    </citation>
    <scope>PROTEIN SEQUENCE OF 16-28</scope>
    <scope>SUBCELLULAR LOCATION</scope>
</reference>
<dbReference type="EMBL" id="X57525">
    <property type="protein sequence ID" value="CAA40746.1"/>
    <property type="molecule type" value="Genomic_DNA"/>
</dbReference>
<dbReference type="EMBL" id="AF062844">
    <property type="protein sequence ID" value="AAC16351.1"/>
    <property type="molecule type" value="Genomic_DNA"/>
</dbReference>
<dbReference type="EMBL" id="AF062845">
    <property type="protein sequence ID" value="AAC16353.1"/>
    <property type="molecule type" value="Genomic_DNA"/>
</dbReference>
<dbReference type="EMBL" id="AF062846">
    <property type="protein sequence ID" value="AAC16355.1"/>
    <property type="molecule type" value="Genomic_DNA"/>
</dbReference>
<dbReference type="EMBL" id="AF062847">
    <property type="protein sequence ID" value="AAC16357.1"/>
    <property type="molecule type" value="Genomic_DNA"/>
</dbReference>
<dbReference type="EMBL" id="AF062848">
    <property type="protein sequence ID" value="AAC16359.1"/>
    <property type="molecule type" value="Genomic_DNA"/>
</dbReference>
<dbReference type="EMBL" id="AF062849">
    <property type="protein sequence ID" value="AAC16361.1"/>
    <property type="molecule type" value="Genomic_DNA"/>
</dbReference>
<dbReference type="EMBL" id="AF062850">
    <property type="protein sequence ID" value="AAC16363.1"/>
    <property type="molecule type" value="Genomic_DNA"/>
</dbReference>
<dbReference type="EMBL" id="AF062851">
    <property type="protein sequence ID" value="AAC16365.1"/>
    <property type="molecule type" value="Genomic_DNA"/>
</dbReference>
<dbReference type="EMBL" id="AF062852">
    <property type="protein sequence ID" value="AAC16367.1"/>
    <property type="molecule type" value="Genomic_DNA"/>
</dbReference>
<dbReference type="EMBL" id="AF062853">
    <property type="protein sequence ID" value="AAC16369.1"/>
    <property type="molecule type" value="Genomic_DNA"/>
</dbReference>
<dbReference type="EMBL" id="AF062854">
    <property type="protein sequence ID" value="AAC16371.1"/>
    <property type="molecule type" value="Genomic_DNA"/>
</dbReference>
<dbReference type="EMBL" id="AF062855">
    <property type="protein sequence ID" value="AAC16373.1"/>
    <property type="molecule type" value="Genomic_DNA"/>
</dbReference>
<dbReference type="EMBL" id="AF062856">
    <property type="protein sequence ID" value="AAC16375.1"/>
    <property type="molecule type" value="Genomic_DNA"/>
</dbReference>
<dbReference type="EMBL" id="AF062857">
    <property type="protein sequence ID" value="AAC16377.1"/>
    <property type="molecule type" value="Genomic_DNA"/>
</dbReference>
<dbReference type="EMBL" id="AF062858">
    <property type="protein sequence ID" value="AAC16379.1"/>
    <property type="molecule type" value="Genomic_DNA"/>
</dbReference>
<dbReference type="EMBL" id="AJ223631">
    <property type="protein sequence ID" value="CAA11514.1"/>
    <property type="molecule type" value="Genomic_DNA"/>
</dbReference>
<dbReference type="PIR" id="S12274">
    <property type="entry name" value="IKECV"/>
</dbReference>
<dbReference type="RefSeq" id="WP_001259758.1">
    <property type="nucleotide sequence ID" value="NZ_WXYX01000007.1"/>
</dbReference>
<dbReference type="RefSeq" id="YP_002527505.1">
    <property type="nucleotide sequence ID" value="NC_011964.1"/>
</dbReference>
<dbReference type="RefSeq" id="YP_009070743.1">
    <property type="nucleotide sequence ID" value="NC_025175.1"/>
</dbReference>
<dbReference type="RefSeq" id="YP_444120.1">
    <property type="nucleotide sequence ID" value="NC_007675.1"/>
</dbReference>
<dbReference type="TCDB" id="1.C.31.1.1">
    <property type="family name" value="the channel-forming colicin v (colicin v) family"/>
</dbReference>
<dbReference type="OMA" id="DKVHSWA"/>
<dbReference type="GO" id="GO:0005576">
    <property type="term" value="C:extracellular region"/>
    <property type="evidence" value="ECO:0007669"/>
    <property type="project" value="UniProtKB-SubCell"/>
</dbReference>
<dbReference type="GO" id="GO:0042742">
    <property type="term" value="P:defense response to bacterium"/>
    <property type="evidence" value="ECO:0007669"/>
    <property type="project" value="UniProtKB-KW"/>
</dbReference>
<dbReference type="GO" id="GO:0031640">
    <property type="term" value="P:killing of cells of another organism"/>
    <property type="evidence" value="ECO:0007669"/>
    <property type="project" value="UniProtKB-KW"/>
</dbReference>
<dbReference type="InterPro" id="IPR020280">
    <property type="entry name" value="MccV"/>
</dbReference>
<dbReference type="Pfam" id="PF17508">
    <property type="entry name" value="MccV"/>
    <property type="match status" value="1"/>
</dbReference>
<comment type="function">
    <text>Colicin V kills sensitive cells by disrupting the membrane potential.</text>
</comment>
<comment type="function">
    <text>Colicins are polypeptide toxins produced by, and active against E.coli and closely related bacteria.</text>
</comment>
<comment type="subcellular location">
    <subcellularLocation>
        <location evidence="2">Secreted</location>
    </subcellularLocation>
    <text>Secreted by the CvaAB/TolC export system.</text>
</comment>
<gene>
    <name type="primary">cvaC</name>
</gene>
<proteinExistence type="evidence at protein level"/>
<feature type="propeptide" id="PRO_0000005675" evidence="1 2">
    <location>
        <begin position="1"/>
        <end position="15"/>
    </location>
</feature>
<feature type="chain" id="PRO_0000005676" description="Colicin-V">
    <location>
        <begin position="16"/>
        <end position="103"/>
    </location>
</feature>
<feature type="disulfide bond" evidence="1">
    <location>
        <begin position="91"/>
        <end position="102"/>
    </location>
</feature>
<keyword id="KW-0044">Antibiotic</keyword>
<keyword id="KW-0929">Antimicrobial</keyword>
<keyword id="KW-0078">Bacteriocin</keyword>
<keyword id="KW-0903">Direct protein sequencing</keyword>
<keyword id="KW-1015">Disulfide bond</keyword>
<keyword id="KW-0614">Plasmid</keyword>
<keyword id="KW-0964">Secreted</keyword>
<accession>P22522</accession>
<organism>
    <name type="scientific">Escherichia coli</name>
    <dbReference type="NCBI Taxonomy" id="562"/>
    <lineage>
        <taxon>Bacteria</taxon>
        <taxon>Pseudomonadati</taxon>
        <taxon>Pseudomonadota</taxon>
        <taxon>Gammaproteobacteria</taxon>
        <taxon>Enterobacterales</taxon>
        <taxon>Enterobacteriaceae</taxon>
        <taxon>Escherichia</taxon>
    </lineage>
</organism>